<dbReference type="EMBL" id="BX640422">
    <property type="protein sequence ID" value="CAE43877.1"/>
    <property type="molecule type" value="Genomic_DNA"/>
</dbReference>
<dbReference type="RefSeq" id="NP_882129.1">
    <property type="nucleotide sequence ID" value="NC_002929.2"/>
</dbReference>
<dbReference type="RefSeq" id="WP_003806910.1">
    <property type="nucleotide sequence ID" value="NZ_CP039022.1"/>
</dbReference>
<dbReference type="SMR" id="Q7VTC7"/>
<dbReference type="STRING" id="257313.BP3619"/>
<dbReference type="PaxDb" id="257313-BP3619"/>
<dbReference type="GeneID" id="93206264"/>
<dbReference type="KEGG" id="bpe:BP3619"/>
<dbReference type="PATRIC" id="fig|257313.5.peg.3917"/>
<dbReference type="eggNOG" id="COG0092">
    <property type="taxonomic scope" value="Bacteria"/>
</dbReference>
<dbReference type="HOGENOM" id="CLU_058591_0_2_4"/>
<dbReference type="Proteomes" id="UP000002676">
    <property type="component" value="Chromosome"/>
</dbReference>
<dbReference type="GO" id="GO:0022627">
    <property type="term" value="C:cytosolic small ribosomal subunit"/>
    <property type="evidence" value="ECO:0007669"/>
    <property type="project" value="TreeGrafter"/>
</dbReference>
<dbReference type="GO" id="GO:0003729">
    <property type="term" value="F:mRNA binding"/>
    <property type="evidence" value="ECO:0007669"/>
    <property type="project" value="UniProtKB-UniRule"/>
</dbReference>
<dbReference type="GO" id="GO:0019843">
    <property type="term" value="F:rRNA binding"/>
    <property type="evidence" value="ECO:0007669"/>
    <property type="project" value="UniProtKB-UniRule"/>
</dbReference>
<dbReference type="GO" id="GO:0003735">
    <property type="term" value="F:structural constituent of ribosome"/>
    <property type="evidence" value="ECO:0007669"/>
    <property type="project" value="InterPro"/>
</dbReference>
<dbReference type="GO" id="GO:0006412">
    <property type="term" value="P:translation"/>
    <property type="evidence" value="ECO:0007669"/>
    <property type="project" value="UniProtKB-UniRule"/>
</dbReference>
<dbReference type="CDD" id="cd02412">
    <property type="entry name" value="KH-II_30S_S3"/>
    <property type="match status" value="1"/>
</dbReference>
<dbReference type="FunFam" id="3.30.1140.32:FF:000006">
    <property type="entry name" value="30S ribosomal protein S3"/>
    <property type="match status" value="1"/>
</dbReference>
<dbReference type="FunFam" id="3.30.300.20:FF:000001">
    <property type="entry name" value="30S ribosomal protein S3"/>
    <property type="match status" value="1"/>
</dbReference>
<dbReference type="Gene3D" id="3.30.300.20">
    <property type="match status" value="1"/>
</dbReference>
<dbReference type="Gene3D" id="3.30.1140.32">
    <property type="entry name" value="Ribosomal protein S3, C-terminal domain"/>
    <property type="match status" value="1"/>
</dbReference>
<dbReference type="HAMAP" id="MF_01309_B">
    <property type="entry name" value="Ribosomal_uS3_B"/>
    <property type="match status" value="1"/>
</dbReference>
<dbReference type="InterPro" id="IPR004087">
    <property type="entry name" value="KH_dom"/>
</dbReference>
<dbReference type="InterPro" id="IPR015946">
    <property type="entry name" value="KH_dom-like_a/b"/>
</dbReference>
<dbReference type="InterPro" id="IPR004044">
    <property type="entry name" value="KH_dom_type_2"/>
</dbReference>
<dbReference type="InterPro" id="IPR009019">
    <property type="entry name" value="KH_sf_prok-type"/>
</dbReference>
<dbReference type="InterPro" id="IPR036419">
    <property type="entry name" value="Ribosomal_S3_C_sf"/>
</dbReference>
<dbReference type="InterPro" id="IPR005704">
    <property type="entry name" value="Ribosomal_uS3_bac-typ"/>
</dbReference>
<dbReference type="InterPro" id="IPR001351">
    <property type="entry name" value="Ribosomal_uS3_C"/>
</dbReference>
<dbReference type="InterPro" id="IPR018280">
    <property type="entry name" value="Ribosomal_uS3_CS"/>
</dbReference>
<dbReference type="NCBIfam" id="TIGR01009">
    <property type="entry name" value="rpsC_bact"/>
    <property type="match status" value="1"/>
</dbReference>
<dbReference type="PANTHER" id="PTHR11760">
    <property type="entry name" value="30S/40S RIBOSOMAL PROTEIN S3"/>
    <property type="match status" value="1"/>
</dbReference>
<dbReference type="PANTHER" id="PTHR11760:SF19">
    <property type="entry name" value="SMALL RIBOSOMAL SUBUNIT PROTEIN US3C"/>
    <property type="match status" value="1"/>
</dbReference>
<dbReference type="Pfam" id="PF07650">
    <property type="entry name" value="KH_2"/>
    <property type="match status" value="1"/>
</dbReference>
<dbReference type="Pfam" id="PF00189">
    <property type="entry name" value="Ribosomal_S3_C"/>
    <property type="match status" value="1"/>
</dbReference>
<dbReference type="SMART" id="SM00322">
    <property type="entry name" value="KH"/>
    <property type="match status" value="1"/>
</dbReference>
<dbReference type="SUPFAM" id="SSF54814">
    <property type="entry name" value="Prokaryotic type KH domain (KH-domain type II)"/>
    <property type="match status" value="1"/>
</dbReference>
<dbReference type="SUPFAM" id="SSF54821">
    <property type="entry name" value="Ribosomal protein S3 C-terminal domain"/>
    <property type="match status" value="1"/>
</dbReference>
<dbReference type="PROSITE" id="PS50823">
    <property type="entry name" value="KH_TYPE_2"/>
    <property type="match status" value="1"/>
</dbReference>
<dbReference type="PROSITE" id="PS00548">
    <property type="entry name" value="RIBOSOMAL_S3"/>
    <property type="match status" value="1"/>
</dbReference>
<feature type="chain" id="PRO_0000130083" description="Small ribosomal subunit protein uS3">
    <location>
        <begin position="1"/>
        <end position="263"/>
    </location>
</feature>
<feature type="domain" description="KH type-2" evidence="1">
    <location>
        <begin position="39"/>
        <end position="107"/>
    </location>
</feature>
<feature type="region of interest" description="Disordered" evidence="2">
    <location>
        <begin position="211"/>
        <end position="263"/>
    </location>
</feature>
<feature type="compositionally biased region" description="Basic and acidic residues" evidence="2">
    <location>
        <begin position="219"/>
        <end position="240"/>
    </location>
</feature>
<sequence length="263" mass="29456">MGQKIHPTGFRLAVTRNWTSRWFADDKAFGTMLAEDIRVREYLKKKLKSASVGRVIIERPAKNARITVYSARPGVVIGKRGEDIENLKADLQRLMGVPVHVNIEEIRKPETDAQLIADSISQQLEKRIMFRRAMKRAMQNAMRLGAQGIKIMSSGRLNGIEIARTEWYREGRVPLHTLKANIDYGTSEAHTTYGVIGIKVWVYKGDMLANGELPPEAATPREEERRPRRAPRGDRPDGARTGRPGGRGRGPRKADAAPAPEGE</sequence>
<name>RS3_BORPE</name>
<proteinExistence type="inferred from homology"/>
<accession>Q7VTC7</accession>
<keyword id="KW-1185">Reference proteome</keyword>
<keyword id="KW-0687">Ribonucleoprotein</keyword>
<keyword id="KW-0689">Ribosomal protein</keyword>
<keyword id="KW-0694">RNA-binding</keyword>
<keyword id="KW-0699">rRNA-binding</keyword>
<reference key="1">
    <citation type="journal article" date="2003" name="Nat. Genet.">
        <title>Comparative analysis of the genome sequences of Bordetella pertussis, Bordetella parapertussis and Bordetella bronchiseptica.</title>
        <authorList>
            <person name="Parkhill J."/>
            <person name="Sebaihia M."/>
            <person name="Preston A."/>
            <person name="Murphy L.D."/>
            <person name="Thomson N.R."/>
            <person name="Harris D.E."/>
            <person name="Holden M.T.G."/>
            <person name="Churcher C.M."/>
            <person name="Bentley S.D."/>
            <person name="Mungall K.L."/>
            <person name="Cerdeno-Tarraga A.-M."/>
            <person name="Temple L."/>
            <person name="James K.D."/>
            <person name="Harris B."/>
            <person name="Quail M.A."/>
            <person name="Achtman M."/>
            <person name="Atkin R."/>
            <person name="Baker S."/>
            <person name="Basham D."/>
            <person name="Bason N."/>
            <person name="Cherevach I."/>
            <person name="Chillingworth T."/>
            <person name="Collins M."/>
            <person name="Cronin A."/>
            <person name="Davis P."/>
            <person name="Doggett J."/>
            <person name="Feltwell T."/>
            <person name="Goble A."/>
            <person name="Hamlin N."/>
            <person name="Hauser H."/>
            <person name="Holroyd S."/>
            <person name="Jagels K."/>
            <person name="Leather S."/>
            <person name="Moule S."/>
            <person name="Norberczak H."/>
            <person name="O'Neil S."/>
            <person name="Ormond D."/>
            <person name="Price C."/>
            <person name="Rabbinowitsch E."/>
            <person name="Rutter S."/>
            <person name="Sanders M."/>
            <person name="Saunders D."/>
            <person name="Seeger K."/>
            <person name="Sharp S."/>
            <person name="Simmonds M."/>
            <person name="Skelton J."/>
            <person name="Squares R."/>
            <person name="Squares S."/>
            <person name="Stevens K."/>
            <person name="Unwin L."/>
            <person name="Whitehead S."/>
            <person name="Barrell B.G."/>
            <person name="Maskell D.J."/>
        </authorList>
    </citation>
    <scope>NUCLEOTIDE SEQUENCE [LARGE SCALE GENOMIC DNA]</scope>
    <source>
        <strain>Tohama I / ATCC BAA-589 / NCTC 13251</strain>
    </source>
</reference>
<organism>
    <name type="scientific">Bordetella pertussis (strain Tohama I / ATCC BAA-589 / NCTC 13251)</name>
    <dbReference type="NCBI Taxonomy" id="257313"/>
    <lineage>
        <taxon>Bacteria</taxon>
        <taxon>Pseudomonadati</taxon>
        <taxon>Pseudomonadota</taxon>
        <taxon>Betaproteobacteria</taxon>
        <taxon>Burkholderiales</taxon>
        <taxon>Alcaligenaceae</taxon>
        <taxon>Bordetella</taxon>
    </lineage>
</organism>
<protein>
    <recommendedName>
        <fullName evidence="1">Small ribosomal subunit protein uS3</fullName>
    </recommendedName>
    <alternativeName>
        <fullName evidence="3">30S ribosomal protein S3</fullName>
    </alternativeName>
</protein>
<gene>
    <name evidence="1" type="primary">rpsC</name>
    <name type="ordered locus">BP3619</name>
</gene>
<evidence type="ECO:0000255" key="1">
    <source>
        <dbReference type="HAMAP-Rule" id="MF_01309"/>
    </source>
</evidence>
<evidence type="ECO:0000256" key="2">
    <source>
        <dbReference type="SAM" id="MobiDB-lite"/>
    </source>
</evidence>
<evidence type="ECO:0000305" key="3"/>
<comment type="function">
    <text evidence="1">Binds the lower part of the 30S subunit head. Binds mRNA in the 70S ribosome, positioning it for translation.</text>
</comment>
<comment type="subunit">
    <text evidence="1">Part of the 30S ribosomal subunit. Forms a tight complex with proteins S10 and S14.</text>
</comment>
<comment type="similarity">
    <text evidence="1">Belongs to the universal ribosomal protein uS3 family.</text>
</comment>